<dbReference type="EMBL" id="CP000544">
    <property type="protein sequence ID" value="ABM62244.1"/>
    <property type="molecule type" value="Genomic_DNA"/>
</dbReference>
<dbReference type="RefSeq" id="WP_011814266.1">
    <property type="nucleotide sequence ID" value="NC_008789.1"/>
</dbReference>
<dbReference type="SMR" id="A1WX32"/>
<dbReference type="STRING" id="349124.Hhal_1477"/>
<dbReference type="KEGG" id="hha:Hhal_1477"/>
<dbReference type="eggNOG" id="COG0576">
    <property type="taxonomic scope" value="Bacteria"/>
</dbReference>
<dbReference type="HOGENOM" id="CLU_057217_6_0_6"/>
<dbReference type="OrthoDB" id="9789811at2"/>
<dbReference type="Proteomes" id="UP000000647">
    <property type="component" value="Chromosome"/>
</dbReference>
<dbReference type="GO" id="GO:0005829">
    <property type="term" value="C:cytosol"/>
    <property type="evidence" value="ECO:0007669"/>
    <property type="project" value="TreeGrafter"/>
</dbReference>
<dbReference type="GO" id="GO:0000774">
    <property type="term" value="F:adenyl-nucleotide exchange factor activity"/>
    <property type="evidence" value="ECO:0007669"/>
    <property type="project" value="InterPro"/>
</dbReference>
<dbReference type="GO" id="GO:0042803">
    <property type="term" value="F:protein homodimerization activity"/>
    <property type="evidence" value="ECO:0007669"/>
    <property type="project" value="InterPro"/>
</dbReference>
<dbReference type="GO" id="GO:0051087">
    <property type="term" value="F:protein-folding chaperone binding"/>
    <property type="evidence" value="ECO:0007669"/>
    <property type="project" value="InterPro"/>
</dbReference>
<dbReference type="GO" id="GO:0051082">
    <property type="term" value="F:unfolded protein binding"/>
    <property type="evidence" value="ECO:0007669"/>
    <property type="project" value="TreeGrafter"/>
</dbReference>
<dbReference type="GO" id="GO:0006457">
    <property type="term" value="P:protein folding"/>
    <property type="evidence" value="ECO:0007669"/>
    <property type="project" value="InterPro"/>
</dbReference>
<dbReference type="CDD" id="cd00446">
    <property type="entry name" value="GrpE"/>
    <property type="match status" value="1"/>
</dbReference>
<dbReference type="FunFam" id="2.30.22.10:FF:000001">
    <property type="entry name" value="Protein GrpE"/>
    <property type="match status" value="1"/>
</dbReference>
<dbReference type="Gene3D" id="3.90.20.20">
    <property type="match status" value="1"/>
</dbReference>
<dbReference type="Gene3D" id="2.30.22.10">
    <property type="entry name" value="Head domain of nucleotide exchange factor GrpE"/>
    <property type="match status" value="1"/>
</dbReference>
<dbReference type="HAMAP" id="MF_01151">
    <property type="entry name" value="GrpE"/>
    <property type="match status" value="1"/>
</dbReference>
<dbReference type="InterPro" id="IPR000740">
    <property type="entry name" value="GrpE"/>
</dbReference>
<dbReference type="InterPro" id="IPR013805">
    <property type="entry name" value="GrpE_coiled_coil"/>
</dbReference>
<dbReference type="InterPro" id="IPR009012">
    <property type="entry name" value="GrpE_head"/>
</dbReference>
<dbReference type="NCBIfam" id="NF010737">
    <property type="entry name" value="PRK14139.1"/>
    <property type="match status" value="1"/>
</dbReference>
<dbReference type="NCBIfam" id="NF010748">
    <property type="entry name" value="PRK14150.1"/>
    <property type="match status" value="1"/>
</dbReference>
<dbReference type="PANTHER" id="PTHR21237">
    <property type="entry name" value="GRPE PROTEIN"/>
    <property type="match status" value="1"/>
</dbReference>
<dbReference type="PANTHER" id="PTHR21237:SF23">
    <property type="entry name" value="GRPE PROTEIN HOMOLOG, MITOCHONDRIAL"/>
    <property type="match status" value="1"/>
</dbReference>
<dbReference type="Pfam" id="PF01025">
    <property type="entry name" value="GrpE"/>
    <property type="match status" value="1"/>
</dbReference>
<dbReference type="PRINTS" id="PR00773">
    <property type="entry name" value="GRPEPROTEIN"/>
</dbReference>
<dbReference type="SUPFAM" id="SSF58014">
    <property type="entry name" value="Coiled-coil domain of nucleotide exchange factor GrpE"/>
    <property type="match status" value="1"/>
</dbReference>
<dbReference type="SUPFAM" id="SSF51064">
    <property type="entry name" value="Head domain of nucleotide exchange factor GrpE"/>
    <property type="match status" value="1"/>
</dbReference>
<dbReference type="PROSITE" id="PS01071">
    <property type="entry name" value="GRPE"/>
    <property type="match status" value="1"/>
</dbReference>
<protein>
    <recommendedName>
        <fullName evidence="1">Protein GrpE</fullName>
    </recommendedName>
    <alternativeName>
        <fullName evidence="1">HSP-70 cofactor</fullName>
    </alternativeName>
</protein>
<comment type="function">
    <text evidence="1">Participates actively in the response to hyperosmotic and heat shock by preventing the aggregation of stress-denatured proteins, in association with DnaK and GrpE. It is the nucleotide exchange factor for DnaK and may function as a thermosensor. Unfolded proteins bind initially to DnaJ; upon interaction with the DnaJ-bound protein, DnaK hydrolyzes its bound ATP, resulting in the formation of a stable complex. GrpE releases ADP from DnaK; ATP binding to DnaK triggers the release of the substrate protein, thus completing the reaction cycle. Several rounds of ATP-dependent interactions between DnaJ, DnaK and GrpE are required for fully efficient folding.</text>
</comment>
<comment type="subunit">
    <text evidence="1">Homodimer.</text>
</comment>
<comment type="subcellular location">
    <subcellularLocation>
        <location evidence="1">Cytoplasm</location>
    </subcellularLocation>
</comment>
<comment type="similarity">
    <text evidence="1">Belongs to the GrpE family.</text>
</comment>
<evidence type="ECO:0000255" key="1">
    <source>
        <dbReference type="HAMAP-Rule" id="MF_01151"/>
    </source>
</evidence>
<evidence type="ECO:0000256" key="2">
    <source>
        <dbReference type="SAM" id="MobiDB-lite"/>
    </source>
</evidence>
<keyword id="KW-0143">Chaperone</keyword>
<keyword id="KW-0963">Cytoplasm</keyword>
<keyword id="KW-1185">Reference proteome</keyword>
<keyword id="KW-0346">Stress response</keyword>
<proteinExistence type="inferred from homology"/>
<sequence length="240" mass="26160">MTDNQRQSTTDGQPETRDPAQATAEAAEQTQATQASAAVEGELQDGSADSATGASLSADDGADPEALRQRVEELEKALADAEQKAEEHWDQVLRMRAELENARRRAEKDVDQAKRQGLEKVCGDLLQVKDSLEMGVQAAEDAEADREKLLEGSQLTLKMLNQVFERFEIEEINPQGERFNPDYHEAMAAQPSDEQEPNTVLQVVQKGYRLQDRLLRPALVVVAKKGDGGAGSGGSVDETA</sequence>
<name>GRPE_HALHL</name>
<gene>
    <name evidence="1" type="primary">grpE</name>
    <name type="ordered locus">Hhal_1477</name>
</gene>
<accession>A1WX32</accession>
<reference key="1">
    <citation type="submission" date="2006-12" db="EMBL/GenBank/DDBJ databases">
        <title>Complete sequence of Halorhodospira halophila SL1.</title>
        <authorList>
            <consortium name="US DOE Joint Genome Institute"/>
            <person name="Copeland A."/>
            <person name="Lucas S."/>
            <person name="Lapidus A."/>
            <person name="Barry K."/>
            <person name="Detter J.C."/>
            <person name="Glavina del Rio T."/>
            <person name="Hammon N."/>
            <person name="Israni S."/>
            <person name="Dalin E."/>
            <person name="Tice H."/>
            <person name="Pitluck S."/>
            <person name="Saunders E."/>
            <person name="Brettin T."/>
            <person name="Bruce D."/>
            <person name="Han C."/>
            <person name="Tapia R."/>
            <person name="Schmutz J."/>
            <person name="Larimer F."/>
            <person name="Land M."/>
            <person name="Hauser L."/>
            <person name="Kyrpides N."/>
            <person name="Mikhailova N."/>
            <person name="Hoff W."/>
            <person name="Richardson P."/>
        </authorList>
    </citation>
    <scope>NUCLEOTIDE SEQUENCE [LARGE SCALE GENOMIC DNA]</scope>
    <source>
        <strain>DSM 244 / SL1</strain>
    </source>
</reference>
<organism>
    <name type="scientific">Halorhodospira halophila (strain DSM 244 / SL1)</name>
    <name type="common">Ectothiorhodospira halophila (strain DSM 244 / SL1)</name>
    <dbReference type="NCBI Taxonomy" id="349124"/>
    <lineage>
        <taxon>Bacteria</taxon>
        <taxon>Pseudomonadati</taxon>
        <taxon>Pseudomonadota</taxon>
        <taxon>Gammaproteobacteria</taxon>
        <taxon>Chromatiales</taxon>
        <taxon>Ectothiorhodospiraceae</taxon>
        <taxon>Halorhodospira</taxon>
    </lineage>
</organism>
<feature type="chain" id="PRO_1000053588" description="Protein GrpE">
    <location>
        <begin position="1"/>
        <end position="240"/>
    </location>
</feature>
<feature type="region of interest" description="Disordered" evidence="2">
    <location>
        <begin position="1"/>
        <end position="89"/>
    </location>
</feature>
<feature type="compositionally biased region" description="Polar residues" evidence="2">
    <location>
        <begin position="1"/>
        <end position="13"/>
    </location>
</feature>
<feature type="compositionally biased region" description="Low complexity" evidence="2">
    <location>
        <begin position="20"/>
        <end position="38"/>
    </location>
</feature>
<feature type="compositionally biased region" description="Basic and acidic residues" evidence="2">
    <location>
        <begin position="65"/>
        <end position="89"/>
    </location>
</feature>